<dbReference type="EC" id="2.7.7.101" evidence="1"/>
<dbReference type="EMBL" id="AE000782">
    <property type="protein sequence ID" value="AAB89350.1"/>
    <property type="molecule type" value="Genomic_DNA"/>
</dbReference>
<dbReference type="PIR" id="B69487">
    <property type="entry name" value="B69487"/>
</dbReference>
<dbReference type="SMR" id="O28380"/>
<dbReference type="STRING" id="224325.AF_1899"/>
<dbReference type="PaxDb" id="224325-AF_1899"/>
<dbReference type="EnsemblBacteria" id="AAB89350">
    <property type="protein sequence ID" value="AAB89350"/>
    <property type="gene ID" value="AF_1899"/>
</dbReference>
<dbReference type="KEGG" id="afu:AF_1899"/>
<dbReference type="eggNOG" id="arCOG04281">
    <property type="taxonomic scope" value="Archaea"/>
</dbReference>
<dbReference type="HOGENOM" id="CLU_034626_0_0_2"/>
<dbReference type="OrthoDB" id="8643at2157"/>
<dbReference type="PhylomeDB" id="O28380"/>
<dbReference type="Proteomes" id="UP000002199">
    <property type="component" value="Chromosome"/>
</dbReference>
<dbReference type="GO" id="GO:0005737">
    <property type="term" value="C:cytoplasm"/>
    <property type="evidence" value="ECO:0007669"/>
    <property type="project" value="TreeGrafter"/>
</dbReference>
<dbReference type="GO" id="GO:0000428">
    <property type="term" value="C:DNA-directed RNA polymerase complex"/>
    <property type="evidence" value="ECO:0007669"/>
    <property type="project" value="UniProtKB-KW"/>
</dbReference>
<dbReference type="GO" id="GO:0000178">
    <property type="term" value="C:exosome (RNase complex)"/>
    <property type="evidence" value="ECO:0007669"/>
    <property type="project" value="UniProtKB-KW"/>
</dbReference>
<dbReference type="GO" id="GO:1990077">
    <property type="term" value="C:primosome complex"/>
    <property type="evidence" value="ECO:0007669"/>
    <property type="project" value="UniProtKB-KW"/>
</dbReference>
<dbReference type="GO" id="GO:0003899">
    <property type="term" value="F:DNA-directed RNA polymerase activity"/>
    <property type="evidence" value="ECO:0007669"/>
    <property type="project" value="InterPro"/>
</dbReference>
<dbReference type="GO" id="GO:0046872">
    <property type="term" value="F:metal ion binding"/>
    <property type="evidence" value="ECO:0007669"/>
    <property type="project" value="UniProtKB-KW"/>
</dbReference>
<dbReference type="GO" id="GO:0008143">
    <property type="term" value="F:poly(A) binding"/>
    <property type="evidence" value="ECO:0007669"/>
    <property type="project" value="InterPro"/>
</dbReference>
<dbReference type="GO" id="GO:0006269">
    <property type="term" value="P:DNA replication, synthesis of primer"/>
    <property type="evidence" value="ECO:0007669"/>
    <property type="project" value="UniProtKB-UniRule"/>
</dbReference>
<dbReference type="CDD" id="cd01029">
    <property type="entry name" value="TOPRIM_primases"/>
    <property type="match status" value="1"/>
</dbReference>
<dbReference type="FunFam" id="3.40.1360.10:FF:000010">
    <property type="entry name" value="DNA primase DnaG"/>
    <property type="match status" value="1"/>
</dbReference>
<dbReference type="Gene3D" id="3.40.1360.10">
    <property type="match status" value="1"/>
</dbReference>
<dbReference type="HAMAP" id="MF_00007">
    <property type="entry name" value="DNA_primase_DnaG_arc"/>
    <property type="match status" value="1"/>
</dbReference>
<dbReference type="InterPro" id="IPR050219">
    <property type="entry name" value="DnaG_primase"/>
</dbReference>
<dbReference type="InterPro" id="IPR020607">
    <property type="entry name" value="Primase_DnaG_arc"/>
</dbReference>
<dbReference type="InterPro" id="IPR034154">
    <property type="entry name" value="TOPRIM_DnaG/twinkle"/>
</dbReference>
<dbReference type="InterPro" id="IPR006171">
    <property type="entry name" value="TOPRIM_dom"/>
</dbReference>
<dbReference type="NCBIfam" id="NF003108">
    <property type="entry name" value="PRK04031.1-1"/>
    <property type="match status" value="1"/>
</dbReference>
<dbReference type="PANTHER" id="PTHR30313">
    <property type="entry name" value="DNA PRIMASE"/>
    <property type="match status" value="1"/>
</dbReference>
<dbReference type="PANTHER" id="PTHR30313:SF2">
    <property type="entry name" value="DNA PRIMASE"/>
    <property type="match status" value="1"/>
</dbReference>
<dbReference type="Pfam" id="PF13662">
    <property type="entry name" value="Toprim_4"/>
    <property type="match status" value="1"/>
</dbReference>
<dbReference type="SMART" id="SM00493">
    <property type="entry name" value="TOPRIM"/>
    <property type="match status" value="1"/>
</dbReference>
<dbReference type="SUPFAM" id="SSF56731">
    <property type="entry name" value="DNA primase core"/>
    <property type="match status" value="1"/>
</dbReference>
<dbReference type="PROSITE" id="PS50880">
    <property type="entry name" value="TOPRIM"/>
    <property type="match status" value="1"/>
</dbReference>
<feature type="chain" id="PRO_0000144124" description="DNA primase DnaG">
    <location>
        <begin position="1"/>
        <end position="399"/>
    </location>
</feature>
<feature type="domain" description="Toprim" evidence="1">
    <location>
        <begin position="182"/>
        <end position="268"/>
    </location>
</feature>
<feature type="binding site" evidence="1">
    <location>
        <position position="188"/>
    </location>
    <ligand>
        <name>Mg(2+)</name>
        <dbReference type="ChEBI" id="CHEBI:18420"/>
        <label>1</label>
        <note>catalytic</note>
    </ligand>
</feature>
<feature type="binding site" evidence="1">
    <location>
        <position position="230"/>
    </location>
    <ligand>
        <name>Mg(2+)</name>
        <dbReference type="ChEBI" id="CHEBI:18420"/>
        <label>1</label>
        <note>catalytic</note>
    </ligand>
</feature>
<feature type="binding site" evidence="1">
    <location>
        <position position="230"/>
    </location>
    <ligand>
        <name>Mg(2+)</name>
        <dbReference type="ChEBI" id="CHEBI:18420"/>
        <label>2</label>
    </ligand>
</feature>
<feature type="binding site" evidence="1">
    <location>
        <position position="232"/>
    </location>
    <ligand>
        <name>Mg(2+)</name>
        <dbReference type="ChEBI" id="CHEBI:18420"/>
        <label>2</label>
    </ligand>
</feature>
<gene>
    <name evidence="1" type="primary">dnaG</name>
    <name type="ordered locus">AF_1899</name>
</gene>
<organism>
    <name type="scientific">Archaeoglobus fulgidus (strain ATCC 49558 / DSM 4304 / JCM 9628 / NBRC 100126 / VC-16)</name>
    <dbReference type="NCBI Taxonomy" id="224325"/>
    <lineage>
        <taxon>Archaea</taxon>
        <taxon>Methanobacteriati</taxon>
        <taxon>Methanobacteriota</taxon>
        <taxon>Archaeoglobi</taxon>
        <taxon>Archaeoglobales</taxon>
        <taxon>Archaeoglobaceae</taxon>
        <taxon>Archaeoglobus</taxon>
    </lineage>
</organism>
<reference key="1">
    <citation type="journal article" date="1997" name="Nature">
        <title>The complete genome sequence of the hyperthermophilic, sulphate-reducing archaeon Archaeoglobus fulgidus.</title>
        <authorList>
            <person name="Klenk H.-P."/>
            <person name="Clayton R.A."/>
            <person name="Tomb J.-F."/>
            <person name="White O."/>
            <person name="Nelson K.E."/>
            <person name="Ketchum K.A."/>
            <person name="Dodson R.J."/>
            <person name="Gwinn M.L."/>
            <person name="Hickey E.K."/>
            <person name="Peterson J.D."/>
            <person name="Richardson D.L."/>
            <person name="Kerlavage A.R."/>
            <person name="Graham D.E."/>
            <person name="Kyrpides N.C."/>
            <person name="Fleischmann R.D."/>
            <person name="Quackenbush J."/>
            <person name="Lee N.H."/>
            <person name="Sutton G.G."/>
            <person name="Gill S.R."/>
            <person name="Kirkness E.F."/>
            <person name="Dougherty B.A."/>
            <person name="McKenney K."/>
            <person name="Adams M.D."/>
            <person name="Loftus B.J."/>
            <person name="Peterson S.N."/>
            <person name="Reich C.I."/>
            <person name="McNeil L.K."/>
            <person name="Badger J.H."/>
            <person name="Glodek A."/>
            <person name="Zhou L."/>
            <person name="Overbeek R."/>
            <person name="Gocayne J.D."/>
            <person name="Weidman J.F."/>
            <person name="McDonald L.A."/>
            <person name="Utterback T.R."/>
            <person name="Cotton M.D."/>
            <person name="Spriggs T."/>
            <person name="Artiach P."/>
            <person name="Kaine B.P."/>
            <person name="Sykes S.M."/>
            <person name="Sadow P.W."/>
            <person name="D'Andrea K.P."/>
            <person name="Bowman C."/>
            <person name="Fujii C."/>
            <person name="Garland S.A."/>
            <person name="Mason T.M."/>
            <person name="Olsen G.J."/>
            <person name="Fraser C.M."/>
            <person name="Smith H.O."/>
            <person name="Woese C.R."/>
            <person name="Venter J.C."/>
        </authorList>
    </citation>
    <scope>NUCLEOTIDE SEQUENCE [LARGE SCALE GENOMIC DNA]</scope>
    <source>
        <strain>ATCC 49558 / DSM 4304 / JCM 9628 / NBRC 100126 / VC-16</strain>
    </source>
</reference>
<evidence type="ECO:0000255" key="1">
    <source>
        <dbReference type="HAMAP-Rule" id="MF_00007"/>
    </source>
</evidence>
<keyword id="KW-0235">DNA replication</keyword>
<keyword id="KW-0240">DNA-directed RNA polymerase</keyword>
<keyword id="KW-0271">Exosome</keyword>
<keyword id="KW-0460">Magnesium</keyword>
<keyword id="KW-0479">Metal-binding</keyword>
<keyword id="KW-0548">Nucleotidyltransferase</keyword>
<keyword id="KW-0639">Primosome</keyword>
<keyword id="KW-1185">Reference proteome</keyword>
<keyword id="KW-0804">Transcription</keyword>
<keyword id="KW-0808">Transferase</keyword>
<sequence>MSSDMEGGMITMKANDTTKYLIHAEIEAEGVVERPDVVGAIFGQTEGLLGGDLDLRELQKTGRIGRIEVKIESKGGRSFGEIKVPSSLDKVETAILAAALETIERVGPCSAKIKVLKIEDVRASKRKRIVERAMNILREHFEEPEIESERIVEIVRQAIRADEIVEYGEEKLPAGPAIDESDAIIVVEGRADVLNLLKHGIKNVIAVEGTNIPKTIVELSKKKTVTAFLDGDRGGDLILKELLQVAEVDYVARAPEGKEVEDLTQKEILKSLRNKVPVEQLHVLKKEAKEGREREKLAEMPKDSISDVLRKHTESVKGRLTARVLDRNLNVIKEVPVRDLVKILKTNNMKGSAIVFDGIITQRLIDLAAKKEFDYIVGVRLGSVVKVPTSLRVITFDQL</sequence>
<proteinExistence type="inferred from homology"/>
<protein>
    <recommendedName>
        <fullName evidence="1">DNA primase DnaG</fullName>
        <ecNumber evidence="1">2.7.7.101</ecNumber>
    </recommendedName>
</protein>
<name>DNAG_ARCFU</name>
<comment type="function">
    <text evidence="1">RNA polymerase that catalyzes the synthesis of short RNA molecules used as primers for DNA polymerase during DNA replication. Also part of the exosome, which is a complex involved in RNA degradation. Acts as a poly(A)-binding protein that enhances the interaction between heteromeric, adenine-rich transcripts and the exosome.</text>
</comment>
<comment type="catalytic activity">
    <reaction evidence="1">
        <text>ssDNA + n NTP = ssDNA/pppN(pN)n-1 hybrid + (n-1) diphosphate.</text>
        <dbReference type="EC" id="2.7.7.101"/>
    </reaction>
</comment>
<comment type="cofactor">
    <cofactor evidence="1">
        <name>Mg(2+)</name>
        <dbReference type="ChEBI" id="CHEBI:18420"/>
    </cofactor>
    <text evidence="1">Binds two Mg(2+) per subunit.</text>
</comment>
<comment type="subunit">
    <text evidence="1">Forms a ternary complex with MCM helicase and DNA. Component of the archaeal exosome complex.</text>
</comment>
<comment type="similarity">
    <text evidence="1">Belongs to the archaeal DnaG primase family.</text>
</comment>
<accession>O28380</accession>